<keyword id="KW-0067">ATP-binding</keyword>
<keyword id="KW-0963">Cytoplasm</keyword>
<keyword id="KW-0227">DNA damage</keyword>
<keyword id="KW-0233">DNA recombination</keyword>
<keyword id="KW-0234">DNA repair</keyword>
<keyword id="KW-0238">DNA-binding</keyword>
<keyword id="KW-0547">Nucleotide-binding</keyword>
<keyword id="KW-1185">Reference proteome</keyword>
<keyword id="KW-0742">SOS response</keyword>
<accession>Q4FQX8</accession>
<evidence type="ECO:0000255" key="1">
    <source>
        <dbReference type="HAMAP-Rule" id="MF_00268"/>
    </source>
</evidence>
<proteinExistence type="inferred from homology"/>
<feature type="chain" id="PRO_1000047973" description="Protein RecA">
    <location>
        <begin position="1"/>
        <end position="352"/>
    </location>
</feature>
<feature type="binding site" evidence="1">
    <location>
        <begin position="66"/>
        <end position="73"/>
    </location>
    <ligand>
        <name>ATP</name>
        <dbReference type="ChEBI" id="CHEBI:30616"/>
    </ligand>
</feature>
<gene>
    <name evidence="1" type="primary">recA</name>
    <name type="ordered locus">Psyc_1732</name>
</gene>
<organism>
    <name type="scientific">Psychrobacter arcticus (strain DSM 17307 / VKM B-2377 / 273-4)</name>
    <dbReference type="NCBI Taxonomy" id="259536"/>
    <lineage>
        <taxon>Bacteria</taxon>
        <taxon>Pseudomonadati</taxon>
        <taxon>Pseudomonadota</taxon>
        <taxon>Gammaproteobacteria</taxon>
        <taxon>Moraxellales</taxon>
        <taxon>Moraxellaceae</taxon>
        <taxon>Psychrobacter</taxon>
    </lineage>
</organism>
<comment type="function">
    <text evidence="1">Can catalyze the hydrolysis of ATP in the presence of single-stranded DNA, the ATP-dependent uptake of single-stranded DNA by duplex DNA, and the ATP-dependent hybridization of homologous single-stranded DNAs. It interacts with LexA causing its activation and leading to its autocatalytic cleavage.</text>
</comment>
<comment type="subcellular location">
    <subcellularLocation>
        <location evidence="1">Cytoplasm</location>
    </subcellularLocation>
</comment>
<comment type="similarity">
    <text evidence="1">Belongs to the RecA family.</text>
</comment>
<reference key="1">
    <citation type="journal article" date="2010" name="Appl. Environ. Microbiol.">
        <title>The genome sequence of Psychrobacter arcticus 273-4, a psychroactive Siberian permafrost bacterium, reveals mechanisms for adaptation to low-temperature growth.</title>
        <authorList>
            <person name="Ayala-del-Rio H.L."/>
            <person name="Chain P.S."/>
            <person name="Grzymski J.J."/>
            <person name="Ponder M.A."/>
            <person name="Ivanova N."/>
            <person name="Bergholz P.W."/>
            <person name="Di Bartolo G."/>
            <person name="Hauser L."/>
            <person name="Land M."/>
            <person name="Bakermans C."/>
            <person name="Rodrigues D."/>
            <person name="Klappenbach J."/>
            <person name="Zarka D."/>
            <person name="Larimer F."/>
            <person name="Richardson P."/>
            <person name="Murray A."/>
            <person name="Thomashow M."/>
            <person name="Tiedje J.M."/>
        </authorList>
    </citation>
    <scope>NUCLEOTIDE SEQUENCE [LARGE SCALE GENOMIC DNA]</scope>
    <source>
        <strain>DSM 17307 / VKM B-2377 / 273-4</strain>
    </source>
</reference>
<dbReference type="EMBL" id="CP000082">
    <property type="protein sequence ID" value="AAZ19580.1"/>
    <property type="molecule type" value="Genomic_DNA"/>
</dbReference>
<dbReference type="RefSeq" id="WP_011280993.1">
    <property type="nucleotide sequence ID" value="NC_007204.1"/>
</dbReference>
<dbReference type="SMR" id="Q4FQX8"/>
<dbReference type="STRING" id="259536.Psyc_1732"/>
<dbReference type="KEGG" id="par:Psyc_1732"/>
<dbReference type="eggNOG" id="COG0468">
    <property type="taxonomic scope" value="Bacteria"/>
</dbReference>
<dbReference type="HOGENOM" id="CLU_040469_3_2_6"/>
<dbReference type="OrthoDB" id="9776733at2"/>
<dbReference type="Proteomes" id="UP000000546">
    <property type="component" value="Chromosome"/>
</dbReference>
<dbReference type="GO" id="GO:0005829">
    <property type="term" value="C:cytosol"/>
    <property type="evidence" value="ECO:0007669"/>
    <property type="project" value="TreeGrafter"/>
</dbReference>
<dbReference type="GO" id="GO:0005524">
    <property type="term" value="F:ATP binding"/>
    <property type="evidence" value="ECO:0007669"/>
    <property type="project" value="UniProtKB-UniRule"/>
</dbReference>
<dbReference type="GO" id="GO:0016887">
    <property type="term" value="F:ATP hydrolysis activity"/>
    <property type="evidence" value="ECO:0007669"/>
    <property type="project" value="InterPro"/>
</dbReference>
<dbReference type="GO" id="GO:0140664">
    <property type="term" value="F:ATP-dependent DNA damage sensor activity"/>
    <property type="evidence" value="ECO:0007669"/>
    <property type="project" value="InterPro"/>
</dbReference>
<dbReference type="GO" id="GO:0003684">
    <property type="term" value="F:damaged DNA binding"/>
    <property type="evidence" value="ECO:0007669"/>
    <property type="project" value="UniProtKB-UniRule"/>
</dbReference>
<dbReference type="GO" id="GO:0003697">
    <property type="term" value="F:single-stranded DNA binding"/>
    <property type="evidence" value="ECO:0007669"/>
    <property type="project" value="UniProtKB-UniRule"/>
</dbReference>
<dbReference type="GO" id="GO:0006310">
    <property type="term" value="P:DNA recombination"/>
    <property type="evidence" value="ECO:0007669"/>
    <property type="project" value="UniProtKB-UniRule"/>
</dbReference>
<dbReference type="GO" id="GO:0006281">
    <property type="term" value="P:DNA repair"/>
    <property type="evidence" value="ECO:0007669"/>
    <property type="project" value="UniProtKB-UniRule"/>
</dbReference>
<dbReference type="GO" id="GO:0009432">
    <property type="term" value="P:SOS response"/>
    <property type="evidence" value="ECO:0007669"/>
    <property type="project" value="UniProtKB-UniRule"/>
</dbReference>
<dbReference type="CDD" id="cd00983">
    <property type="entry name" value="RecA"/>
    <property type="match status" value="1"/>
</dbReference>
<dbReference type="FunFam" id="3.40.50.300:FF:000087">
    <property type="entry name" value="Recombinase RecA"/>
    <property type="match status" value="1"/>
</dbReference>
<dbReference type="Gene3D" id="3.40.50.300">
    <property type="entry name" value="P-loop containing nucleotide triphosphate hydrolases"/>
    <property type="match status" value="1"/>
</dbReference>
<dbReference type="HAMAP" id="MF_00268">
    <property type="entry name" value="RecA"/>
    <property type="match status" value="1"/>
</dbReference>
<dbReference type="InterPro" id="IPR003593">
    <property type="entry name" value="AAA+_ATPase"/>
</dbReference>
<dbReference type="InterPro" id="IPR013765">
    <property type="entry name" value="DNA_recomb/repair_RecA"/>
</dbReference>
<dbReference type="InterPro" id="IPR020584">
    <property type="entry name" value="DNA_recomb/repair_RecA_CS"/>
</dbReference>
<dbReference type="InterPro" id="IPR027417">
    <property type="entry name" value="P-loop_NTPase"/>
</dbReference>
<dbReference type="InterPro" id="IPR049261">
    <property type="entry name" value="RecA-like_C"/>
</dbReference>
<dbReference type="InterPro" id="IPR049428">
    <property type="entry name" value="RecA-like_N"/>
</dbReference>
<dbReference type="InterPro" id="IPR020588">
    <property type="entry name" value="RecA_ATP-bd"/>
</dbReference>
<dbReference type="InterPro" id="IPR023400">
    <property type="entry name" value="RecA_C_sf"/>
</dbReference>
<dbReference type="InterPro" id="IPR020587">
    <property type="entry name" value="RecA_monomer-monomer_interface"/>
</dbReference>
<dbReference type="NCBIfam" id="TIGR02012">
    <property type="entry name" value="tigrfam_recA"/>
    <property type="match status" value="1"/>
</dbReference>
<dbReference type="PANTHER" id="PTHR45900:SF1">
    <property type="entry name" value="MITOCHONDRIAL DNA REPAIR PROTEIN RECA HOMOLOG-RELATED"/>
    <property type="match status" value="1"/>
</dbReference>
<dbReference type="PANTHER" id="PTHR45900">
    <property type="entry name" value="RECA"/>
    <property type="match status" value="1"/>
</dbReference>
<dbReference type="Pfam" id="PF00154">
    <property type="entry name" value="RecA"/>
    <property type="match status" value="1"/>
</dbReference>
<dbReference type="Pfam" id="PF21096">
    <property type="entry name" value="RecA_C"/>
    <property type="match status" value="1"/>
</dbReference>
<dbReference type="PRINTS" id="PR00142">
    <property type="entry name" value="RECA"/>
</dbReference>
<dbReference type="SMART" id="SM00382">
    <property type="entry name" value="AAA"/>
    <property type="match status" value="1"/>
</dbReference>
<dbReference type="SUPFAM" id="SSF52540">
    <property type="entry name" value="P-loop containing nucleoside triphosphate hydrolases"/>
    <property type="match status" value="1"/>
</dbReference>
<dbReference type="SUPFAM" id="SSF54752">
    <property type="entry name" value="RecA protein, C-terminal domain"/>
    <property type="match status" value="1"/>
</dbReference>
<dbReference type="PROSITE" id="PS00321">
    <property type="entry name" value="RECA_1"/>
    <property type="match status" value="1"/>
</dbReference>
<dbReference type="PROSITE" id="PS50162">
    <property type="entry name" value="RECA_2"/>
    <property type="match status" value="1"/>
</dbReference>
<dbReference type="PROSITE" id="PS50163">
    <property type="entry name" value="RECA_3"/>
    <property type="match status" value="1"/>
</dbReference>
<sequence length="352" mass="37650">MDDNKAKALKAALAQIEKQFGKNTIMHLGDDSAALDVDVVSTGSLGLDIALGIGGLPKGRIVEIYGPESSGKTTMTLQAIAECQKQGGVCAFIDAEHALDPVYARKLGVNTDDLLLSQPDNGEQALEITDMLVRSGAIDMIVIDSVAALTPRAEIEGEMGDSHMGLQARLMSQALRKITGNAKRSNCMVLFINQIRMKIGVMFGSPETTTGGNALKFYASVRMDIRRIGAVKNGDEIIGNQTRVKVIKNKMAPPFRQAEFEITYGEGTNHLAEVIDLGVEIGAVGKAGSWYSYGDEKIGQGKANSVLFLKENPAIAEEIEAKIRAEKLGVKDDSKAAVVAETNEELASEPVQ</sequence>
<name>RECA_PSYA2</name>
<protein>
    <recommendedName>
        <fullName evidence="1">Protein RecA</fullName>
    </recommendedName>
    <alternativeName>
        <fullName evidence="1">Recombinase A</fullName>
    </alternativeName>
</protein>